<reference key="1">
    <citation type="submission" date="1995-11" db="EMBL/GenBank/DDBJ databases">
        <title>Nucleotide sequence and gene organization of the gerK spore germinating locus of Bacillus subtilis 168.</title>
        <authorList>
            <person name="Irie R."/>
            <person name="Fujita Y.Y.F."/>
            <person name="Kobayasi M."/>
        </authorList>
    </citation>
    <scope>NUCLEOTIDE SEQUENCE [GENOMIC DNA]</scope>
    <source>
        <strain>168</strain>
    </source>
</reference>
<reference key="2">
    <citation type="journal article" date="1996" name="Microbiology">
        <title>The 25 degrees-36 degrees region of the Bacillus subtilis chromosome: determination of the sequence of a 146 kb segment and identification of 113 genes.</title>
        <authorList>
            <person name="Yamane K."/>
            <person name="Kumano M."/>
            <person name="Kurita K."/>
        </authorList>
    </citation>
    <scope>NUCLEOTIDE SEQUENCE [GENOMIC DNA]</scope>
    <source>
        <strain>168</strain>
    </source>
</reference>
<reference key="3">
    <citation type="journal article" date="1997" name="Nature">
        <title>The complete genome sequence of the Gram-positive bacterium Bacillus subtilis.</title>
        <authorList>
            <person name="Kunst F."/>
            <person name="Ogasawara N."/>
            <person name="Moszer I."/>
            <person name="Albertini A.M."/>
            <person name="Alloni G."/>
            <person name="Azevedo V."/>
            <person name="Bertero M.G."/>
            <person name="Bessieres P."/>
            <person name="Bolotin A."/>
            <person name="Borchert S."/>
            <person name="Borriss R."/>
            <person name="Boursier L."/>
            <person name="Brans A."/>
            <person name="Braun M."/>
            <person name="Brignell S.C."/>
            <person name="Bron S."/>
            <person name="Brouillet S."/>
            <person name="Bruschi C.V."/>
            <person name="Caldwell B."/>
            <person name="Capuano V."/>
            <person name="Carter N.M."/>
            <person name="Choi S.-K."/>
            <person name="Codani J.-J."/>
            <person name="Connerton I.F."/>
            <person name="Cummings N.J."/>
            <person name="Daniel R.A."/>
            <person name="Denizot F."/>
            <person name="Devine K.M."/>
            <person name="Duesterhoeft A."/>
            <person name="Ehrlich S.D."/>
            <person name="Emmerson P.T."/>
            <person name="Entian K.-D."/>
            <person name="Errington J."/>
            <person name="Fabret C."/>
            <person name="Ferrari E."/>
            <person name="Foulger D."/>
            <person name="Fritz C."/>
            <person name="Fujita M."/>
            <person name="Fujita Y."/>
            <person name="Fuma S."/>
            <person name="Galizzi A."/>
            <person name="Galleron N."/>
            <person name="Ghim S.-Y."/>
            <person name="Glaser P."/>
            <person name="Goffeau A."/>
            <person name="Golightly E.J."/>
            <person name="Grandi G."/>
            <person name="Guiseppi G."/>
            <person name="Guy B.J."/>
            <person name="Haga K."/>
            <person name="Haiech J."/>
            <person name="Harwood C.R."/>
            <person name="Henaut A."/>
            <person name="Hilbert H."/>
            <person name="Holsappel S."/>
            <person name="Hosono S."/>
            <person name="Hullo M.-F."/>
            <person name="Itaya M."/>
            <person name="Jones L.-M."/>
            <person name="Joris B."/>
            <person name="Karamata D."/>
            <person name="Kasahara Y."/>
            <person name="Klaerr-Blanchard M."/>
            <person name="Klein C."/>
            <person name="Kobayashi Y."/>
            <person name="Koetter P."/>
            <person name="Koningstein G."/>
            <person name="Krogh S."/>
            <person name="Kumano M."/>
            <person name="Kurita K."/>
            <person name="Lapidus A."/>
            <person name="Lardinois S."/>
            <person name="Lauber J."/>
            <person name="Lazarevic V."/>
            <person name="Lee S.-M."/>
            <person name="Levine A."/>
            <person name="Liu H."/>
            <person name="Masuda S."/>
            <person name="Mauel C."/>
            <person name="Medigue C."/>
            <person name="Medina N."/>
            <person name="Mellado R.P."/>
            <person name="Mizuno M."/>
            <person name="Moestl D."/>
            <person name="Nakai S."/>
            <person name="Noback M."/>
            <person name="Noone D."/>
            <person name="O'Reilly M."/>
            <person name="Ogawa K."/>
            <person name="Ogiwara A."/>
            <person name="Oudega B."/>
            <person name="Park S.-H."/>
            <person name="Parro V."/>
            <person name="Pohl T.M."/>
            <person name="Portetelle D."/>
            <person name="Porwollik S."/>
            <person name="Prescott A.M."/>
            <person name="Presecan E."/>
            <person name="Pujic P."/>
            <person name="Purnelle B."/>
            <person name="Rapoport G."/>
            <person name="Rey M."/>
            <person name="Reynolds S."/>
            <person name="Rieger M."/>
            <person name="Rivolta C."/>
            <person name="Rocha E."/>
            <person name="Roche B."/>
            <person name="Rose M."/>
            <person name="Sadaie Y."/>
            <person name="Sato T."/>
            <person name="Scanlan E."/>
            <person name="Schleich S."/>
            <person name="Schroeter R."/>
            <person name="Scoffone F."/>
            <person name="Sekiguchi J."/>
            <person name="Sekowska A."/>
            <person name="Seror S.J."/>
            <person name="Serror P."/>
            <person name="Shin B.-S."/>
            <person name="Soldo B."/>
            <person name="Sorokin A."/>
            <person name="Tacconi E."/>
            <person name="Takagi T."/>
            <person name="Takahashi H."/>
            <person name="Takemaru K."/>
            <person name="Takeuchi M."/>
            <person name="Tamakoshi A."/>
            <person name="Tanaka T."/>
            <person name="Terpstra P."/>
            <person name="Tognoni A."/>
            <person name="Tosato V."/>
            <person name="Uchiyama S."/>
            <person name="Vandenbol M."/>
            <person name="Vannier F."/>
            <person name="Vassarotti A."/>
            <person name="Viari A."/>
            <person name="Wambutt R."/>
            <person name="Wedler E."/>
            <person name="Wedler H."/>
            <person name="Weitzenegger T."/>
            <person name="Winters P."/>
            <person name="Wipat A."/>
            <person name="Yamamoto H."/>
            <person name="Yamane K."/>
            <person name="Yasumoto K."/>
            <person name="Yata K."/>
            <person name="Yoshida K."/>
            <person name="Yoshikawa H.-F."/>
            <person name="Zumstein E."/>
            <person name="Yoshikawa H."/>
            <person name="Danchin A."/>
        </authorList>
    </citation>
    <scope>NUCLEOTIDE SEQUENCE [LARGE SCALE GENOMIC DNA]</scope>
    <source>
        <strain>168</strain>
    </source>
</reference>
<comment type="function">
    <text>Involved in the germination response to the combination of glucose, fructose, L-asparagine, and KCl.</text>
</comment>
<comment type="subcellular location">
    <subcellularLocation>
        <location evidence="2">Cell membrane</location>
        <topology evidence="2">Lipid-anchor</topology>
    </subcellularLocation>
</comment>
<comment type="similarity">
    <text evidence="2">Belongs to the GerABKC lipoprotein family.</text>
</comment>
<keyword id="KW-1003">Cell membrane</keyword>
<keyword id="KW-0309">Germination</keyword>
<keyword id="KW-0449">Lipoprotein</keyword>
<keyword id="KW-0472">Membrane</keyword>
<keyword id="KW-0564">Palmitate</keyword>
<keyword id="KW-1185">Reference proteome</keyword>
<keyword id="KW-0732">Signal</keyword>
<evidence type="ECO:0000255" key="1"/>
<evidence type="ECO:0000305" key="2"/>
<proteinExistence type="inferred from homology"/>
<protein>
    <recommendedName>
        <fullName>Spore germination protein KC</fullName>
    </recommendedName>
</protein>
<gene>
    <name type="primary">gerKC</name>
    <name type="ordered locus">BSU03710</name>
</gene>
<organism>
    <name type="scientific">Bacillus subtilis (strain 168)</name>
    <dbReference type="NCBI Taxonomy" id="224308"/>
    <lineage>
        <taxon>Bacteria</taxon>
        <taxon>Bacillati</taxon>
        <taxon>Bacillota</taxon>
        <taxon>Bacilli</taxon>
        <taxon>Bacillales</taxon>
        <taxon>Bacillaceae</taxon>
        <taxon>Bacillus</taxon>
    </lineage>
</organism>
<dbReference type="EMBL" id="D78187">
    <property type="protein sequence ID" value="BAA11255.1"/>
    <property type="molecule type" value="Genomic_DNA"/>
</dbReference>
<dbReference type="EMBL" id="D50453">
    <property type="protein sequence ID" value="BAA09003.1"/>
    <property type="molecule type" value="Genomic_DNA"/>
</dbReference>
<dbReference type="EMBL" id="AL009126">
    <property type="protein sequence ID" value="CAB12179.1"/>
    <property type="molecule type" value="Genomic_DNA"/>
</dbReference>
<dbReference type="PIR" id="I39859">
    <property type="entry name" value="I39859"/>
</dbReference>
<dbReference type="RefSeq" id="NP_388253.1">
    <property type="nucleotide sequence ID" value="NC_000964.3"/>
</dbReference>
<dbReference type="RefSeq" id="WP_003246578.1">
    <property type="nucleotide sequence ID" value="NZ_OZ025638.1"/>
</dbReference>
<dbReference type="SMR" id="P49941"/>
<dbReference type="FunCoup" id="P49941">
    <property type="interactions" value="96"/>
</dbReference>
<dbReference type="STRING" id="224308.BSU03710"/>
<dbReference type="PaxDb" id="224308-BSU03710"/>
<dbReference type="EnsemblBacteria" id="CAB12179">
    <property type="protein sequence ID" value="CAB12179"/>
    <property type="gene ID" value="BSU_03710"/>
</dbReference>
<dbReference type="GeneID" id="938287"/>
<dbReference type="KEGG" id="bsu:BSU03710"/>
<dbReference type="PATRIC" id="fig|224308.179.peg.391"/>
<dbReference type="eggNOG" id="ENOG502Z9N7">
    <property type="taxonomic scope" value="Bacteria"/>
</dbReference>
<dbReference type="InParanoid" id="P49941"/>
<dbReference type="OrthoDB" id="9816067at2"/>
<dbReference type="PhylomeDB" id="P49941"/>
<dbReference type="BioCyc" id="BSUB:BSU03710-MONOMER"/>
<dbReference type="Proteomes" id="UP000001570">
    <property type="component" value="Chromosome"/>
</dbReference>
<dbReference type="GO" id="GO:0005886">
    <property type="term" value="C:plasma membrane"/>
    <property type="evidence" value="ECO:0007669"/>
    <property type="project" value="UniProtKB-SubCell"/>
</dbReference>
<dbReference type="GO" id="GO:0009847">
    <property type="term" value="P:spore germination"/>
    <property type="evidence" value="ECO:0007669"/>
    <property type="project" value="InterPro"/>
</dbReference>
<dbReference type="Gene3D" id="6.20.190.10">
    <property type="entry name" value="Nutrient germinant receptor protein C, domain 1"/>
    <property type="match status" value="1"/>
</dbReference>
<dbReference type="Gene3D" id="3.30.300.210">
    <property type="entry name" value="Nutrient germinant receptor protein C, domain 3"/>
    <property type="match status" value="1"/>
</dbReference>
<dbReference type="InterPro" id="IPR008844">
    <property type="entry name" value="Spore_GerAC-like"/>
</dbReference>
<dbReference type="InterPro" id="IPR046953">
    <property type="entry name" value="Spore_GerAC-like_C"/>
</dbReference>
<dbReference type="InterPro" id="IPR038501">
    <property type="entry name" value="Spore_GerAC_C_sf"/>
</dbReference>
<dbReference type="NCBIfam" id="TIGR02887">
    <property type="entry name" value="spore_ger_x_C"/>
    <property type="match status" value="1"/>
</dbReference>
<dbReference type="PANTHER" id="PTHR35789">
    <property type="entry name" value="SPORE GERMINATION PROTEIN B3"/>
    <property type="match status" value="1"/>
</dbReference>
<dbReference type="PANTHER" id="PTHR35789:SF1">
    <property type="entry name" value="SPORE GERMINATION PROTEIN B3"/>
    <property type="match status" value="1"/>
</dbReference>
<dbReference type="Pfam" id="PF05504">
    <property type="entry name" value="Spore_GerAC"/>
    <property type="match status" value="1"/>
</dbReference>
<dbReference type="Pfam" id="PF25198">
    <property type="entry name" value="Spore_GerAC_N"/>
    <property type="match status" value="1"/>
</dbReference>
<feature type="signal peptide" evidence="1">
    <location>
        <begin position="1"/>
        <end position="20"/>
    </location>
</feature>
<feature type="chain" id="PRO_0000018175" description="Spore germination protein KC">
    <location>
        <begin position="21"/>
        <end position="407"/>
    </location>
</feature>
<feature type="lipid moiety-binding region" description="N-palmitoyl cysteine" evidence="2">
    <location>
        <position position="21"/>
    </location>
</feature>
<feature type="lipid moiety-binding region" description="S-diacylglycerol cysteine" evidence="2">
    <location>
        <position position="21"/>
    </location>
</feature>
<sequence>MVRKCLLAVLMLLSVIVLPGCWDKRELTDLAIISAIGIDRTNDSNYVLHLQIINPGNVAGGLQGGGAGDRPPVSVYSIEGNNITEALRKASMKVSRRLYFAHTNLVVINEKLAKEEGLDFVLDNLDRDTEFRTTATFVVAHKTKAENIVKILTPIDKIPSNKVNKTLDFTEAQYGRVVKINIQDVLKTLAANTMAPVIPGYMMIGDDKKGVSMENTQATDPKAILQADGLAVFDKAGYLKYWLEDDESVGAVWLMNKIQHTFINADWGKTKDAVSLQVTHQDTKLVPKMRNGRPYIHVKVSVEGIIDAVKYPFQLSDPKVLAAIEKALNKELEKEISHTVKKIKKNKIDFIGFGDTIYRKYPEQWEKMKDTWDKEYLPELPIDVKAETYIRRTGLRNNPIKHQFKDD</sequence>
<name>GERKC_BACSU</name>
<accession>P49941</accession>